<organism>
    <name type="scientific">Dehalococcoides mccartyi (strain CBDB1)</name>
    <dbReference type="NCBI Taxonomy" id="255470"/>
    <lineage>
        <taxon>Bacteria</taxon>
        <taxon>Bacillati</taxon>
        <taxon>Chloroflexota</taxon>
        <taxon>Dehalococcoidia</taxon>
        <taxon>Dehalococcoidales</taxon>
        <taxon>Dehalococcoidaceae</taxon>
        <taxon>Dehalococcoides</taxon>
    </lineage>
</organism>
<gene>
    <name evidence="1" type="primary">hisS</name>
    <name type="ordered locus">cbdbA7</name>
</gene>
<name>SYH_DEHMC</name>
<comment type="catalytic activity">
    <reaction evidence="1">
        <text>tRNA(His) + L-histidine + ATP = L-histidyl-tRNA(His) + AMP + diphosphate + H(+)</text>
        <dbReference type="Rhea" id="RHEA:17313"/>
        <dbReference type="Rhea" id="RHEA-COMP:9665"/>
        <dbReference type="Rhea" id="RHEA-COMP:9689"/>
        <dbReference type="ChEBI" id="CHEBI:15378"/>
        <dbReference type="ChEBI" id="CHEBI:30616"/>
        <dbReference type="ChEBI" id="CHEBI:33019"/>
        <dbReference type="ChEBI" id="CHEBI:57595"/>
        <dbReference type="ChEBI" id="CHEBI:78442"/>
        <dbReference type="ChEBI" id="CHEBI:78527"/>
        <dbReference type="ChEBI" id="CHEBI:456215"/>
        <dbReference type="EC" id="6.1.1.21"/>
    </reaction>
</comment>
<comment type="subunit">
    <text evidence="1">Homodimer.</text>
</comment>
<comment type="subcellular location">
    <subcellularLocation>
        <location evidence="1">Cytoplasm</location>
    </subcellularLocation>
</comment>
<comment type="similarity">
    <text evidence="1">Belongs to the class-II aminoacyl-tRNA synthetase family.</text>
</comment>
<sequence>MYQSPRGTEDILPEDQPYWHFVRQQAARIAALYGYQRTDTPVFEDAGLFVRSVGEGTDIVSKEMYTFEDRGGDKLTLRPEGTAPVCRAYLEHGMQTRTKPVKLYYLSSIFRYDRPQAGRYRQHHQFGFEAIGEADASLDAEIIEMAWSFYNLLGITDLSLELNSIGCRQCRPNYISALKDYYQQHAGKLCPDCNTRLDKNTLRLLDCKRAECQAVAGNAPRSADYLCPDCLAHYSRLKECLTILDLPFHENFRLVRGLDYYSRTVFEIQPMAEGAQSTIGGGGRYDGLIEQLGGEATPAMGFATGIERIILNLKRQGIVPSPLPSPAVFLAYMGETASLASFALASDLRKAGIGIYQTYAQKSIKAQLRQANSLGVDWVVILGEEELKQGCAVLRNMKEAGQANIPLDQLICEIKKQI</sequence>
<protein>
    <recommendedName>
        <fullName evidence="1">Histidine--tRNA ligase</fullName>
        <ecNumber evidence="1">6.1.1.21</ecNumber>
    </recommendedName>
    <alternativeName>
        <fullName evidence="1">Histidyl-tRNA synthetase</fullName>
        <shortName evidence="1">HisRS</shortName>
    </alternativeName>
</protein>
<accession>Q3ZWB6</accession>
<keyword id="KW-0030">Aminoacyl-tRNA synthetase</keyword>
<keyword id="KW-0067">ATP-binding</keyword>
<keyword id="KW-0963">Cytoplasm</keyword>
<keyword id="KW-0436">Ligase</keyword>
<keyword id="KW-0547">Nucleotide-binding</keyword>
<keyword id="KW-0648">Protein biosynthesis</keyword>
<feature type="chain" id="PRO_0000136152" description="Histidine--tRNA ligase">
    <location>
        <begin position="1"/>
        <end position="418"/>
    </location>
</feature>
<evidence type="ECO:0000255" key="1">
    <source>
        <dbReference type="HAMAP-Rule" id="MF_00127"/>
    </source>
</evidence>
<reference key="1">
    <citation type="journal article" date="2005" name="Nat. Biotechnol.">
        <title>Genome sequence of the chlorinated compound-respiring bacterium Dehalococcoides species strain CBDB1.</title>
        <authorList>
            <person name="Kube M."/>
            <person name="Beck A."/>
            <person name="Zinder S.H."/>
            <person name="Kuhl H."/>
            <person name="Reinhardt R."/>
            <person name="Adrian L."/>
        </authorList>
    </citation>
    <scope>NUCLEOTIDE SEQUENCE [LARGE SCALE GENOMIC DNA]</scope>
    <source>
        <strain>CBDB1</strain>
    </source>
</reference>
<dbReference type="EC" id="6.1.1.21" evidence="1"/>
<dbReference type="EMBL" id="AJ965256">
    <property type="protein sequence ID" value="CAI82285.1"/>
    <property type="molecule type" value="Genomic_DNA"/>
</dbReference>
<dbReference type="RefSeq" id="WP_011308644.1">
    <property type="nucleotide sequence ID" value="NC_007356.1"/>
</dbReference>
<dbReference type="SMR" id="Q3ZWB6"/>
<dbReference type="KEGG" id="deh:cbdbA7"/>
<dbReference type="HOGENOM" id="CLU_025113_1_1_0"/>
<dbReference type="Proteomes" id="UP000000433">
    <property type="component" value="Chromosome"/>
</dbReference>
<dbReference type="GO" id="GO:0005737">
    <property type="term" value="C:cytoplasm"/>
    <property type="evidence" value="ECO:0007669"/>
    <property type="project" value="UniProtKB-SubCell"/>
</dbReference>
<dbReference type="GO" id="GO:0005524">
    <property type="term" value="F:ATP binding"/>
    <property type="evidence" value="ECO:0007669"/>
    <property type="project" value="UniProtKB-UniRule"/>
</dbReference>
<dbReference type="GO" id="GO:0004821">
    <property type="term" value="F:histidine-tRNA ligase activity"/>
    <property type="evidence" value="ECO:0007669"/>
    <property type="project" value="UniProtKB-UniRule"/>
</dbReference>
<dbReference type="GO" id="GO:0006427">
    <property type="term" value="P:histidyl-tRNA aminoacylation"/>
    <property type="evidence" value="ECO:0007669"/>
    <property type="project" value="UniProtKB-UniRule"/>
</dbReference>
<dbReference type="CDD" id="cd00773">
    <property type="entry name" value="HisRS-like_core"/>
    <property type="match status" value="1"/>
</dbReference>
<dbReference type="CDD" id="cd00859">
    <property type="entry name" value="HisRS_anticodon"/>
    <property type="match status" value="1"/>
</dbReference>
<dbReference type="Gene3D" id="3.40.50.800">
    <property type="entry name" value="Anticodon-binding domain"/>
    <property type="match status" value="1"/>
</dbReference>
<dbReference type="Gene3D" id="3.30.930.10">
    <property type="entry name" value="Bira Bifunctional Protein, Domain 2"/>
    <property type="match status" value="1"/>
</dbReference>
<dbReference type="HAMAP" id="MF_00127">
    <property type="entry name" value="His_tRNA_synth"/>
    <property type="match status" value="1"/>
</dbReference>
<dbReference type="InterPro" id="IPR006195">
    <property type="entry name" value="aa-tRNA-synth_II"/>
</dbReference>
<dbReference type="InterPro" id="IPR045864">
    <property type="entry name" value="aa-tRNA-synth_II/BPL/LPL"/>
</dbReference>
<dbReference type="InterPro" id="IPR004154">
    <property type="entry name" value="Anticodon-bd"/>
</dbReference>
<dbReference type="InterPro" id="IPR036621">
    <property type="entry name" value="Anticodon-bd_dom_sf"/>
</dbReference>
<dbReference type="InterPro" id="IPR015807">
    <property type="entry name" value="His-tRNA-ligase"/>
</dbReference>
<dbReference type="InterPro" id="IPR041715">
    <property type="entry name" value="HisRS-like_core"/>
</dbReference>
<dbReference type="InterPro" id="IPR004516">
    <property type="entry name" value="HisRS/HisZ"/>
</dbReference>
<dbReference type="InterPro" id="IPR033656">
    <property type="entry name" value="HisRS_anticodon"/>
</dbReference>
<dbReference type="NCBIfam" id="TIGR00442">
    <property type="entry name" value="hisS"/>
    <property type="match status" value="1"/>
</dbReference>
<dbReference type="PANTHER" id="PTHR43707:SF1">
    <property type="entry name" value="HISTIDINE--TRNA LIGASE, MITOCHONDRIAL-RELATED"/>
    <property type="match status" value="1"/>
</dbReference>
<dbReference type="PANTHER" id="PTHR43707">
    <property type="entry name" value="HISTIDYL-TRNA SYNTHETASE"/>
    <property type="match status" value="1"/>
</dbReference>
<dbReference type="Pfam" id="PF03129">
    <property type="entry name" value="HGTP_anticodon"/>
    <property type="match status" value="1"/>
</dbReference>
<dbReference type="Pfam" id="PF13393">
    <property type="entry name" value="tRNA-synt_His"/>
    <property type="match status" value="1"/>
</dbReference>
<dbReference type="PIRSF" id="PIRSF001549">
    <property type="entry name" value="His-tRNA_synth"/>
    <property type="match status" value="1"/>
</dbReference>
<dbReference type="SUPFAM" id="SSF52954">
    <property type="entry name" value="Class II aaRS ABD-related"/>
    <property type="match status" value="1"/>
</dbReference>
<dbReference type="SUPFAM" id="SSF55681">
    <property type="entry name" value="Class II aaRS and biotin synthetases"/>
    <property type="match status" value="1"/>
</dbReference>
<dbReference type="PROSITE" id="PS50862">
    <property type="entry name" value="AA_TRNA_LIGASE_II"/>
    <property type="match status" value="1"/>
</dbReference>
<proteinExistence type="inferred from homology"/>